<protein>
    <recommendedName>
        <fullName>Uncharacterized protein C40H1.3</fullName>
    </recommendedName>
</protein>
<reference key="1">
    <citation type="journal article" date="1994" name="Nature">
        <title>2.2 Mb of contiguous nucleotide sequence from chromosome III of C. elegans.</title>
        <authorList>
            <person name="Wilson R."/>
            <person name="Ainscough R."/>
            <person name="Anderson K."/>
            <person name="Baynes C."/>
            <person name="Berks M."/>
            <person name="Bonfield J."/>
            <person name="Burton J."/>
            <person name="Connell M."/>
            <person name="Copsey T."/>
            <person name="Cooper J."/>
            <person name="Coulson A."/>
            <person name="Craxton M."/>
            <person name="Dear S."/>
            <person name="Du Z."/>
            <person name="Durbin R."/>
            <person name="Favello A."/>
            <person name="Fraser A."/>
            <person name="Fulton L."/>
            <person name="Gardner A."/>
            <person name="Green P."/>
            <person name="Hawkins T."/>
            <person name="Hillier L."/>
            <person name="Jier M."/>
            <person name="Johnston L."/>
            <person name="Jones M."/>
            <person name="Kershaw J."/>
            <person name="Kirsten J."/>
            <person name="Laisster N."/>
            <person name="Latreille P."/>
            <person name="Lightning J."/>
            <person name="Lloyd C."/>
            <person name="Mortimore B."/>
            <person name="O'Callaghan M."/>
            <person name="Parsons J."/>
            <person name="Percy C."/>
            <person name="Rifken L."/>
            <person name="Roopra A."/>
            <person name="Saunders D."/>
            <person name="Shownkeen R."/>
            <person name="Sims M."/>
            <person name="Smaldon N."/>
            <person name="Smith A."/>
            <person name="Smith M."/>
            <person name="Sonnhammer E."/>
            <person name="Staden R."/>
            <person name="Sulston J."/>
            <person name="Thierry-Mieg J."/>
            <person name="Thomas K."/>
            <person name="Vaudin M."/>
            <person name="Vaughan K."/>
            <person name="Waterston R."/>
            <person name="Watson A."/>
            <person name="Weinstock L."/>
            <person name="Wilkinson-Sproat J."/>
            <person name="Wohldman P."/>
        </authorList>
    </citation>
    <scope>NUCLEOTIDE SEQUENCE [LARGE SCALE GENOMIC DNA]</scope>
    <source>
        <strain>Bristol N2</strain>
    </source>
</reference>
<reference key="2">
    <citation type="journal article" date="1998" name="Science">
        <title>Genome sequence of the nematode C. elegans: a platform for investigating biology.</title>
        <authorList>
            <consortium name="The C. elegans sequencing consortium"/>
        </authorList>
    </citation>
    <scope>NUCLEOTIDE SEQUENCE [LARGE SCALE GENOMIC DNA]</scope>
    <source>
        <strain>Bristol N2</strain>
    </source>
</reference>
<organism>
    <name type="scientific">Caenorhabditis elegans</name>
    <dbReference type="NCBI Taxonomy" id="6239"/>
    <lineage>
        <taxon>Eukaryota</taxon>
        <taxon>Metazoa</taxon>
        <taxon>Ecdysozoa</taxon>
        <taxon>Nematoda</taxon>
        <taxon>Chromadorea</taxon>
        <taxon>Rhabditida</taxon>
        <taxon>Rhabditina</taxon>
        <taxon>Rhabditomorpha</taxon>
        <taxon>Rhabditoidea</taxon>
        <taxon>Rhabditidae</taxon>
        <taxon>Peloderinae</taxon>
        <taxon>Caenorhabditis</taxon>
    </lineage>
</organism>
<keyword id="KW-1185">Reference proteome</keyword>
<name>YLF3_CAEEL</name>
<accession>Q03573</accession>
<proteinExistence type="predicted"/>
<gene>
    <name evidence="2" type="primary">cepr-104.1</name>
    <name evidence="2" type="ORF">C40H1.3</name>
</gene>
<dbReference type="EMBL" id="Z19154">
    <property type="protein sequence ID" value="CAA79554.1"/>
    <property type="molecule type" value="Genomic_DNA"/>
</dbReference>
<dbReference type="PIR" id="S28298">
    <property type="entry name" value="S28298"/>
</dbReference>
<dbReference type="SMR" id="Q03573"/>
<dbReference type="BioGRID" id="48195">
    <property type="interactions" value="2"/>
</dbReference>
<dbReference type="FunCoup" id="Q03573">
    <property type="interactions" value="1510"/>
</dbReference>
<dbReference type="IntAct" id="Q03573">
    <property type="interactions" value="1"/>
</dbReference>
<dbReference type="STRING" id="6239.C40H1.3.1"/>
<dbReference type="PaxDb" id="6239-C40H1.3"/>
<dbReference type="EnsemblMetazoa" id="C40H1.3.1">
    <property type="protein sequence ID" value="C40H1.3.1"/>
    <property type="gene ID" value="WBGene00008039"/>
</dbReference>
<dbReference type="KEGG" id="cel:CELE_C40H1.3"/>
<dbReference type="UCSC" id="C40H1.3">
    <property type="organism name" value="c. elegans"/>
</dbReference>
<dbReference type="AGR" id="WB:WBGene00008039"/>
<dbReference type="CTD" id="183366"/>
<dbReference type="WormBase" id="C40H1.3">
    <property type="protein sequence ID" value="CE00111"/>
    <property type="gene ID" value="WBGene00008039"/>
    <property type="gene designation" value="cepr-104.1"/>
</dbReference>
<dbReference type="eggNOG" id="ENOG502STGJ">
    <property type="taxonomic scope" value="Eukaryota"/>
</dbReference>
<dbReference type="GeneTree" id="ENSGT00390000013405"/>
<dbReference type="HOGENOM" id="CLU_541041_0_0_1"/>
<dbReference type="InParanoid" id="Q03573"/>
<dbReference type="OMA" id="CKYCMKL"/>
<dbReference type="OrthoDB" id="66599at2759"/>
<dbReference type="PRO" id="PR:Q03573"/>
<dbReference type="Proteomes" id="UP000001940">
    <property type="component" value="Chromosome III"/>
</dbReference>
<dbReference type="Bgee" id="WBGene00008039">
    <property type="expression patterns" value="Expressed in larva"/>
</dbReference>
<dbReference type="InterPro" id="IPR052607">
    <property type="entry name" value="CEP104-like"/>
</dbReference>
<dbReference type="InterPro" id="IPR048738">
    <property type="entry name" value="CEP104_Znf"/>
</dbReference>
<dbReference type="PANTHER" id="PTHR13371:SF0">
    <property type="entry name" value="CENTROSOMAL PROTEIN OF 104 KDA"/>
    <property type="match status" value="1"/>
</dbReference>
<dbReference type="PANTHER" id="PTHR13371">
    <property type="entry name" value="GLYCINE-, GLUTAMATE-, THIENYLCYCLOHEXYLPIPERIDINE-BINDING PROTEIN"/>
    <property type="match status" value="1"/>
</dbReference>
<dbReference type="Pfam" id="PF21039">
    <property type="entry name" value="CEP104_ZnF"/>
    <property type="match status" value="1"/>
</dbReference>
<sequence length="504" mass="57712">MSSSRNFDLEYDDYKERRNAAGMGSRASSRNGGRFKPIDKEKEKEKKEIGDYGLPKNEYKMQGYDERSSDVGADPLASVRTLRNNLRVMSLEHRDKDEPVKSHLCQSACDDLSKAEKQLVDLSHKRSDAVVRGDSRQAEQIAKDMDRVKSDAIRNAYSDLMMEDGTMKAFGVNSKWTPDKNPMPSDDWKPMTPMKPRKRAETPKGRKTESRQSNRGNNDNGDQRMTSKATTRSPERRVIPTEPSKPKTTRKNQRLSTIGHVPEAIPVVDTPLPGGSTVQDDPYKMPTYVGRCPHCQLTESGLGRAGGMEKHFAKYCKVMTSCKYCMKLTMVSQLTDHLIYRCEFLQDTMEACNDCGLAIEKEDQKRGGSHPMCRGRRPPTGAQWCPLCTIAVEDNEENWREHLLNNCYNNQRRDGPEKDPWEMKQEQEDILLGAKEKKKREMEEEERLKKEAEIRRQQQQVVVNNTGYPGKMIDADKLVVALQEIQERKKAEKKKKLKDIEKET</sequence>
<evidence type="ECO:0000256" key="1">
    <source>
        <dbReference type="SAM" id="MobiDB-lite"/>
    </source>
</evidence>
<evidence type="ECO:0000312" key="2">
    <source>
        <dbReference type="WormBase" id="C40H1.3"/>
    </source>
</evidence>
<feature type="chain" id="PRO_0000065231" description="Uncharacterized protein C40H1.3">
    <location>
        <begin position="1"/>
        <end position="504"/>
    </location>
</feature>
<feature type="region of interest" description="Disordered" evidence="1">
    <location>
        <begin position="1"/>
        <end position="59"/>
    </location>
</feature>
<feature type="region of interest" description="Disordered" evidence="1">
    <location>
        <begin position="171"/>
        <end position="255"/>
    </location>
</feature>
<feature type="compositionally biased region" description="Basic and acidic residues" evidence="1">
    <location>
        <begin position="36"/>
        <end position="50"/>
    </location>
</feature>
<feature type="compositionally biased region" description="Basic and acidic residues" evidence="1">
    <location>
        <begin position="199"/>
        <end position="212"/>
    </location>
</feature>
<feature type="compositionally biased region" description="Polar residues" evidence="1">
    <location>
        <begin position="213"/>
        <end position="232"/>
    </location>
</feature>